<proteinExistence type="inferred from homology"/>
<dbReference type="EMBL" id="GG666573">
    <property type="protein sequence ID" value="EEN53412.1"/>
    <property type="molecule type" value="Genomic_DNA"/>
</dbReference>
<dbReference type="RefSeq" id="XP_002597400.1">
    <property type="nucleotide sequence ID" value="XM_002597354.1"/>
</dbReference>
<dbReference type="SMR" id="C3Z1P5"/>
<dbReference type="STRING" id="7739.C3Z1P5"/>
<dbReference type="eggNOG" id="KOG3454">
    <property type="taxonomic scope" value="Eukaryota"/>
</dbReference>
<dbReference type="InParanoid" id="C3Z1P5"/>
<dbReference type="Proteomes" id="UP000001554">
    <property type="component" value="Unplaced"/>
</dbReference>
<dbReference type="GO" id="GO:0000243">
    <property type="term" value="C:commitment complex"/>
    <property type="evidence" value="ECO:0007669"/>
    <property type="project" value="UniProtKB-UniRule"/>
</dbReference>
<dbReference type="GO" id="GO:0005685">
    <property type="term" value="C:U1 snRNP"/>
    <property type="evidence" value="ECO:0000318"/>
    <property type="project" value="GO_Central"/>
</dbReference>
<dbReference type="GO" id="GO:0071004">
    <property type="term" value="C:U2-type prespliceosome"/>
    <property type="evidence" value="ECO:0007669"/>
    <property type="project" value="UniProtKB-UniRule"/>
</dbReference>
<dbReference type="GO" id="GO:0003729">
    <property type="term" value="F:mRNA binding"/>
    <property type="evidence" value="ECO:0007669"/>
    <property type="project" value="UniProtKB-UniRule"/>
</dbReference>
<dbReference type="GO" id="GO:0030627">
    <property type="term" value="F:pre-mRNA 5'-splice site binding"/>
    <property type="evidence" value="ECO:0000318"/>
    <property type="project" value="GO_Central"/>
</dbReference>
<dbReference type="GO" id="GO:0030619">
    <property type="term" value="F:U1 snRNA binding"/>
    <property type="evidence" value="ECO:0007669"/>
    <property type="project" value="UniProtKB-UniRule"/>
</dbReference>
<dbReference type="GO" id="GO:0008270">
    <property type="term" value="F:zinc ion binding"/>
    <property type="evidence" value="ECO:0007669"/>
    <property type="project" value="UniProtKB-UniRule"/>
</dbReference>
<dbReference type="GO" id="GO:0000395">
    <property type="term" value="P:mRNA 5'-splice site recognition"/>
    <property type="evidence" value="ECO:0000318"/>
    <property type="project" value="GO_Central"/>
</dbReference>
<dbReference type="GO" id="GO:0000387">
    <property type="term" value="P:spliceosomal snRNP assembly"/>
    <property type="evidence" value="ECO:0007669"/>
    <property type="project" value="UniProtKB-UniRule"/>
</dbReference>
<dbReference type="FunFam" id="3.30.160.60:FF:000059">
    <property type="entry name" value="U1 small nuclear ribonucleoprotein C"/>
    <property type="match status" value="1"/>
</dbReference>
<dbReference type="Gene3D" id="3.30.160.60">
    <property type="entry name" value="Classic Zinc Finger"/>
    <property type="match status" value="1"/>
</dbReference>
<dbReference type="HAMAP" id="MF_03153">
    <property type="entry name" value="U1_C"/>
    <property type="match status" value="1"/>
</dbReference>
<dbReference type="InterPro" id="IPR000690">
    <property type="entry name" value="Matrin/U1-C_Znf_C2H2"/>
</dbReference>
<dbReference type="InterPro" id="IPR003604">
    <property type="entry name" value="Matrin/U1-like-C_Znf_C2H2"/>
</dbReference>
<dbReference type="InterPro" id="IPR013085">
    <property type="entry name" value="U1-CZ_Znf_C2H2"/>
</dbReference>
<dbReference type="InterPro" id="IPR017340">
    <property type="entry name" value="U1_snRNP-C"/>
</dbReference>
<dbReference type="InterPro" id="IPR036236">
    <property type="entry name" value="Znf_C2H2_sf"/>
</dbReference>
<dbReference type="PANTHER" id="PTHR31148">
    <property type="entry name" value="U1 SMALL NUCLEAR RIBONUCLEOPROTEIN C"/>
    <property type="match status" value="1"/>
</dbReference>
<dbReference type="PANTHER" id="PTHR31148:SF1">
    <property type="entry name" value="U1 SMALL NUCLEAR RIBONUCLEOPROTEIN C"/>
    <property type="match status" value="1"/>
</dbReference>
<dbReference type="Pfam" id="PF06220">
    <property type="entry name" value="zf-U1"/>
    <property type="match status" value="1"/>
</dbReference>
<dbReference type="SMART" id="SM00451">
    <property type="entry name" value="ZnF_U1"/>
    <property type="match status" value="1"/>
</dbReference>
<dbReference type="SUPFAM" id="SSF57667">
    <property type="entry name" value="beta-beta-alpha zinc fingers"/>
    <property type="match status" value="1"/>
</dbReference>
<dbReference type="PROSITE" id="PS50171">
    <property type="entry name" value="ZF_MATRIN"/>
    <property type="match status" value="1"/>
</dbReference>
<evidence type="ECO:0000255" key="1">
    <source>
        <dbReference type="HAMAP-Rule" id="MF_03153"/>
    </source>
</evidence>
<evidence type="ECO:0000256" key="2">
    <source>
        <dbReference type="SAM" id="MobiDB-lite"/>
    </source>
</evidence>
<name>RU1C_BRAFL</name>
<comment type="function">
    <text evidence="1">Component of the spliceosomal U1 snRNP, which is essential for recognition of the pre-mRNA 5' splice-site and the subsequent assembly of the spliceosome. U1-C is directly involved in initial 5' splice-site recognition for both constitutive and regulated alternative splicing. The interaction with the 5' splice-site seems to precede base-pairing between the pre-mRNA and the U1 snRNA. Stimulates commitment or early (E) complex formation by stabilizing the base pairing of the 5' end of the U1 snRNA and the 5' splice-site region.</text>
</comment>
<comment type="subunit">
    <text evidence="1">U1 snRNP is composed of the 7 core Sm proteins B/B', D1, D2, D3, E, F and G that assemble in a heptameric protein ring on the Sm site of the small nuclear RNA to form the core snRNP, and at least 3 U1 snRNP-specific proteins U1-70K, U1-A and U1-C. U1-C interacts with U1 snRNA and the 5' splice-site region of the pre-mRNA.</text>
</comment>
<comment type="subcellular location">
    <subcellularLocation>
        <location evidence="1">Nucleus</location>
    </subcellularLocation>
</comment>
<comment type="similarity">
    <text evidence="1">Belongs to the U1 small nuclear ribonucleoprotein C family.</text>
</comment>
<keyword id="KW-0479">Metal-binding</keyword>
<keyword id="KW-0539">Nucleus</keyword>
<keyword id="KW-1185">Reference proteome</keyword>
<keyword id="KW-0687">Ribonucleoprotein</keyword>
<keyword id="KW-0694">RNA-binding</keyword>
<keyword id="KW-0862">Zinc</keyword>
<keyword id="KW-0863">Zinc-finger</keyword>
<reference key="1">
    <citation type="journal article" date="2008" name="Nature">
        <title>The amphioxus genome and the evolution of the chordate karyotype.</title>
        <authorList>
            <person name="Putnam N.H."/>
            <person name="Butts T."/>
            <person name="Ferrier D.E.K."/>
            <person name="Furlong R.F."/>
            <person name="Hellsten U."/>
            <person name="Kawashima T."/>
            <person name="Robinson-Rechavi M."/>
            <person name="Shoguchi E."/>
            <person name="Terry A."/>
            <person name="Yu J.-K."/>
            <person name="Benito-Gutierrez E.L."/>
            <person name="Dubchak I."/>
            <person name="Garcia-Fernandez J."/>
            <person name="Gibson-Brown J.J."/>
            <person name="Grigoriev I.V."/>
            <person name="Horton A.C."/>
            <person name="de Jong P.J."/>
            <person name="Jurka J."/>
            <person name="Kapitonov V.V."/>
            <person name="Kohara Y."/>
            <person name="Kuroki Y."/>
            <person name="Lindquist E."/>
            <person name="Lucas S."/>
            <person name="Osoegawa K."/>
            <person name="Pennacchio L.A."/>
            <person name="Salamov A.A."/>
            <person name="Satou Y."/>
            <person name="Sauka-Spengler T."/>
            <person name="Schmutz J."/>
            <person name="Shin-I T."/>
            <person name="Toyoda A."/>
            <person name="Bronner-Fraser M."/>
            <person name="Fujiyama A."/>
            <person name="Holland L.Z."/>
            <person name="Holland P.W.H."/>
            <person name="Satoh N."/>
            <person name="Rokhsar D.S."/>
        </authorList>
    </citation>
    <scope>NUCLEOTIDE SEQUENCE [LARGE SCALE GENOMIC DNA]</scope>
    <source>
        <strain>S238N-H82</strain>
        <tissue>Testis</tissue>
    </source>
</reference>
<protein>
    <recommendedName>
        <fullName evidence="1">U1 small nuclear ribonucleoprotein C</fullName>
        <shortName evidence="1">U1 snRNP C</shortName>
        <shortName evidence="1">U1-C</shortName>
        <shortName evidence="1">U1C</shortName>
    </recommendedName>
</protein>
<accession>C3Z1P5</accession>
<organism>
    <name type="scientific">Branchiostoma floridae</name>
    <name type="common">Florida lancelet</name>
    <name type="synonym">Amphioxus</name>
    <dbReference type="NCBI Taxonomy" id="7739"/>
    <lineage>
        <taxon>Eukaryota</taxon>
        <taxon>Metazoa</taxon>
        <taxon>Chordata</taxon>
        <taxon>Cephalochordata</taxon>
        <taxon>Leptocardii</taxon>
        <taxon>Amphioxiformes</taxon>
        <taxon>Branchiostomatidae</taxon>
        <taxon>Branchiostoma</taxon>
    </lineage>
</organism>
<sequence length="221" mass="23324">MPKYFCDYCDTYLTHDSPSVRKTHCNGRKHKENVRVYYQKWMEEQAQQLIDQTTAAFQAGKIPNNPFPNAAGQVGNEPGAKVLPPAILQAAAFQAGKIASNPFPTSQAGPGPQGGGTMIPPPPSLQGPGGPGSAPAPPRMPGPLLMTPPPGAAAPGMAPPGAPTLPQPARGPILSVGAVMGPRLCKHSYHINKALFLIKIHTLQKATQSQLVVYKTVEKSK</sequence>
<gene>
    <name type="ORF">BRAFLDRAFT_69314</name>
</gene>
<feature type="chain" id="PRO_0000414256" description="U1 small nuclear ribonucleoprotein C">
    <location>
        <begin position="1"/>
        <end position="221"/>
    </location>
</feature>
<feature type="zinc finger region" description="Matrin-type" evidence="1">
    <location>
        <begin position="4"/>
        <end position="36"/>
    </location>
</feature>
<feature type="region of interest" description="Disordered" evidence="2">
    <location>
        <begin position="100"/>
        <end position="168"/>
    </location>
</feature>
<feature type="compositionally biased region" description="Pro residues" evidence="2">
    <location>
        <begin position="134"/>
        <end position="166"/>
    </location>
</feature>